<gene>
    <name evidence="1" type="primary">fmt</name>
    <name type="ordered locus">FTF0925</name>
</gene>
<sequence>MKKLNIIFAGTPDISAQVLKDLYKSQHNIQAVLTQPDRAKGRGKKVQFSPVKEVALANHTPVFQPLSFKKNPEVLEQIKQLKPDVIVVIAYGIIVPQEFLDIPRYGCLNIHVSLLPKWRGAAPIQRAIQAGDTKTGVCIMQMDAGLDTGDILNTLEIEIQETDTSQTLHDKFAKLSIKPLLETLEKIEIIKPEPQQGEPTYAHKITKQEGLIDFTKSAWQISCHIRAFTPWPGAYFILDDEAIKVGEFEILYQNTDNRKAGTIIDIYRSGFDIATSDKIIRFRQLQFPNKKMLNIVDILNGKDLDKYIGYKLG</sequence>
<name>FMT_FRAT1</name>
<reference key="1">
    <citation type="journal article" date="2007" name="PLoS ONE">
        <title>Genome sequencing shows that European isolates of Francisella tularensis subspecies tularensis are almost identical to US laboratory strain Schu S4.</title>
        <authorList>
            <person name="Chaudhuri R.R."/>
            <person name="Ren C.-P."/>
            <person name="Desmond L."/>
            <person name="Vincent G.A."/>
            <person name="Silman N.J."/>
            <person name="Brehm J.K."/>
            <person name="Elmore M.J."/>
            <person name="Hudson M.J."/>
            <person name="Forsman M."/>
            <person name="Isherwood K.E."/>
            <person name="Gurycova D."/>
            <person name="Minton N.P."/>
            <person name="Titball R.W."/>
            <person name="Pallen M.J."/>
            <person name="Vipond R."/>
        </authorList>
    </citation>
    <scope>NUCLEOTIDE SEQUENCE [LARGE SCALE GENOMIC DNA]</scope>
    <source>
        <strain>FSC 198</strain>
    </source>
</reference>
<organism>
    <name type="scientific">Francisella tularensis subsp. tularensis (strain FSC 198)</name>
    <dbReference type="NCBI Taxonomy" id="393115"/>
    <lineage>
        <taxon>Bacteria</taxon>
        <taxon>Pseudomonadati</taxon>
        <taxon>Pseudomonadota</taxon>
        <taxon>Gammaproteobacteria</taxon>
        <taxon>Thiotrichales</taxon>
        <taxon>Francisellaceae</taxon>
        <taxon>Francisella</taxon>
    </lineage>
</organism>
<dbReference type="EC" id="2.1.2.9" evidence="1"/>
<dbReference type="EMBL" id="AM286280">
    <property type="protein sequence ID" value="CAL08941.1"/>
    <property type="molecule type" value="Genomic_DNA"/>
</dbReference>
<dbReference type="RefSeq" id="WP_003019095.1">
    <property type="nucleotide sequence ID" value="NC_008245.1"/>
</dbReference>
<dbReference type="SMR" id="Q14HS3"/>
<dbReference type="KEGG" id="ftf:FTF0925"/>
<dbReference type="HOGENOM" id="CLU_033347_1_2_6"/>
<dbReference type="GO" id="GO:0005829">
    <property type="term" value="C:cytosol"/>
    <property type="evidence" value="ECO:0007669"/>
    <property type="project" value="TreeGrafter"/>
</dbReference>
<dbReference type="GO" id="GO:0004479">
    <property type="term" value="F:methionyl-tRNA formyltransferase activity"/>
    <property type="evidence" value="ECO:0007669"/>
    <property type="project" value="UniProtKB-UniRule"/>
</dbReference>
<dbReference type="CDD" id="cd08646">
    <property type="entry name" value="FMT_core_Met-tRNA-FMT_N"/>
    <property type="match status" value="1"/>
</dbReference>
<dbReference type="CDD" id="cd08704">
    <property type="entry name" value="Met_tRNA_FMT_C"/>
    <property type="match status" value="1"/>
</dbReference>
<dbReference type="Gene3D" id="3.40.50.12230">
    <property type="match status" value="1"/>
</dbReference>
<dbReference type="HAMAP" id="MF_00182">
    <property type="entry name" value="Formyl_trans"/>
    <property type="match status" value="1"/>
</dbReference>
<dbReference type="InterPro" id="IPR005794">
    <property type="entry name" value="Fmt"/>
</dbReference>
<dbReference type="InterPro" id="IPR005793">
    <property type="entry name" value="Formyl_trans_C"/>
</dbReference>
<dbReference type="InterPro" id="IPR002376">
    <property type="entry name" value="Formyl_transf_N"/>
</dbReference>
<dbReference type="InterPro" id="IPR036477">
    <property type="entry name" value="Formyl_transf_N_sf"/>
</dbReference>
<dbReference type="InterPro" id="IPR011034">
    <property type="entry name" value="Formyl_transferase-like_C_sf"/>
</dbReference>
<dbReference type="InterPro" id="IPR001555">
    <property type="entry name" value="GART_AS"/>
</dbReference>
<dbReference type="InterPro" id="IPR044135">
    <property type="entry name" value="Met-tRNA-FMT_C"/>
</dbReference>
<dbReference type="InterPro" id="IPR041711">
    <property type="entry name" value="Met-tRNA-FMT_N"/>
</dbReference>
<dbReference type="NCBIfam" id="TIGR00460">
    <property type="entry name" value="fmt"/>
    <property type="match status" value="1"/>
</dbReference>
<dbReference type="PANTHER" id="PTHR11138">
    <property type="entry name" value="METHIONYL-TRNA FORMYLTRANSFERASE"/>
    <property type="match status" value="1"/>
</dbReference>
<dbReference type="PANTHER" id="PTHR11138:SF5">
    <property type="entry name" value="METHIONYL-TRNA FORMYLTRANSFERASE, MITOCHONDRIAL"/>
    <property type="match status" value="1"/>
</dbReference>
<dbReference type="Pfam" id="PF02911">
    <property type="entry name" value="Formyl_trans_C"/>
    <property type="match status" value="1"/>
</dbReference>
<dbReference type="Pfam" id="PF00551">
    <property type="entry name" value="Formyl_trans_N"/>
    <property type="match status" value="1"/>
</dbReference>
<dbReference type="SUPFAM" id="SSF50486">
    <property type="entry name" value="FMT C-terminal domain-like"/>
    <property type="match status" value="1"/>
</dbReference>
<dbReference type="SUPFAM" id="SSF53328">
    <property type="entry name" value="Formyltransferase"/>
    <property type="match status" value="1"/>
</dbReference>
<dbReference type="PROSITE" id="PS00373">
    <property type="entry name" value="GART"/>
    <property type="match status" value="1"/>
</dbReference>
<comment type="function">
    <text evidence="1">Attaches a formyl group to the free amino group of methionyl-tRNA(fMet). The formyl group appears to play a dual role in the initiator identity of N-formylmethionyl-tRNA by promoting its recognition by IF2 and preventing the misappropriation of this tRNA by the elongation apparatus.</text>
</comment>
<comment type="catalytic activity">
    <reaction evidence="1">
        <text>L-methionyl-tRNA(fMet) + (6R)-10-formyltetrahydrofolate = N-formyl-L-methionyl-tRNA(fMet) + (6S)-5,6,7,8-tetrahydrofolate + H(+)</text>
        <dbReference type="Rhea" id="RHEA:24380"/>
        <dbReference type="Rhea" id="RHEA-COMP:9952"/>
        <dbReference type="Rhea" id="RHEA-COMP:9953"/>
        <dbReference type="ChEBI" id="CHEBI:15378"/>
        <dbReference type="ChEBI" id="CHEBI:57453"/>
        <dbReference type="ChEBI" id="CHEBI:78530"/>
        <dbReference type="ChEBI" id="CHEBI:78844"/>
        <dbReference type="ChEBI" id="CHEBI:195366"/>
        <dbReference type="EC" id="2.1.2.9"/>
    </reaction>
</comment>
<comment type="similarity">
    <text evidence="1">Belongs to the Fmt family.</text>
</comment>
<feature type="chain" id="PRO_1000020063" description="Methionyl-tRNA formyltransferase">
    <location>
        <begin position="1"/>
        <end position="313"/>
    </location>
</feature>
<feature type="binding site" evidence="1">
    <location>
        <begin position="113"/>
        <end position="116"/>
    </location>
    <ligand>
        <name>(6S)-5,6,7,8-tetrahydrofolate</name>
        <dbReference type="ChEBI" id="CHEBI:57453"/>
    </ligand>
</feature>
<keyword id="KW-0648">Protein biosynthesis</keyword>
<keyword id="KW-0808">Transferase</keyword>
<accession>Q14HS3</accession>
<evidence type="ECO:0000255" key="1">
    <source>
        <dbReference type="HAMAP-Rule" id="MF_00182"/>
    </source>
</evidence>
<proteinExistence type="inferred from homology"/>
<protein>
    <recommendedName>
        <fullName evidence="1">Methionyl-tRNA formyltransferase</fullName>
        <ecNumber evidence="1">2.1.2.9</ecNumber>
    </recommendedName>
</protein>